<accession>Q9LI65</accession>
<gene>
    <name type="ordered locus">At3g30340</name>
    <name type="ORF">T6J22.10</name>
</gene>
<keyword id="KW-0472">Membrane</keyword>
<keyword id="KW-1185">Reference proteome</keyword>
<keyword id="KW-0677">Repeat</keyword>
<keyword id="KW-0812">Transmembrane</keyword>
<keyword id="KW-1133">Transmembrane helix</keyword>
<name>WTR24_ARATH</name>
<reference key="1">
    <citation type="journal article" date="2000" name="DNA Res.">
        <title>Structural analysis of Arabidopsis thaliana chromosome 3. II. Sequence features of the 4,251,695 bp regions covered by 90 P1, TAC and BAC clones.</title>
        <authorList>
            <person name="Kaneko T."/>
            <person name="Katoh T."/>
            <person name="Sato S."/>
            <person name="Nakamura Y."/>
            <person name="Asamizu E."/>
            <person name="Tabata S."/>
        </authorList>
    </citation>
    <scope>NUCLEOTIDE SEQUENCE [LARGE SCALE GENOMIC DNA]</scope>
    <source>
        <strain>cv. Columbia</strain>
    </source>
</reference>
<reference key="2">
    <citation type="journal article" date="2017" name="Plant J.">
        <title>Araport11: a complete reannotation of the Arabidopsis thaliana reference genome.</title>
        <authorList>
            <person name="Cheng C.Y."/>
            <person name="Krishnakumar V."/>
            <person name="Chan A.P."/>
            <person name="Thibaud-Nissen F."/>
            <person name="Schobel S."/>
            <person name="Town C.D."/>
        </authorList>
    </citation>
    <scope>GENOME REANNOTATION</scope>
    <source>
        <strain>cv. Columbia</strain>
    </source>
</reference>
<reference key="3">
    <citation type="journal article" date="2002" name="Science">
        <title>Functional annotation of a full-length Arabidopsis cDNA collection.</title>
        <authorList>
            <person name="Seki M."/>
            <person name="Narusaka M."/>
            <person name="Kamiya A."/>
            <person name="Ishida J."/>
            <person name="Satou M."/>
            <person name="Sakurai T."/>
            <person name="Nakajima M."/>
            <person name="Enju A."/>
            <person name="Akiyama K."/>
            <person name="Oono Y."/>
            <person name="Muramatsu M."/>
            <person name="Hayashizaki Y."/>
            <person name="Kawai J."/>
            <person name="Carninci P."/>
            <person name="Itoh M."/>
            <person name="Ishii Y."/>
            <person name="Arakawa T."/>
            <person name="Shibata K."/>
            <person name="Shinagawa A."/>
            <person name="Shinozaki K."/>
        </authorList>
    </citation>
    <scope>NUCLEOTIDE SEQUENCE [LARGE SCALE MRNA]</scope>
    <source>
        <strain>cv. Columbia</strain>
    </source>
</reference>
<organism>
    <name type="scientific">Arabidopsis thaliana</name>
    <name type="common">Mouse-ear cress</name>
    <dbReference type="NCBI Taxonomy" id="3702"/>
    <lineage>
        <taxon>Eukaryota</taxon>
        <taxon>Viridiplantae</taxon>
        <taxon>Streptophyta</taxon>
        <taxon>Embryophyta</taxon>
        <taxon>Tracheophyta</taxon>
        <taxon>Spermatophyta</taxon>
        <taxon>Magnoliopsida</taxon>
        <taxon>eudicotyledons</taxon>
        <taxon>Gunneridae</taxon>
        <taxon>Pentapetalae</taxon>
        <taxon>rosids</taxon>
        <taxon>malvids</taxon>
        <taxon>Brassicales</taxon>
        <taxon>Brassicaceae</taxon>
        <taxon>Camelineae</taxon>
        <taxon>Arabidopsis</taxon>
    </lineage>
</organism>
<comment type="subcellular location">
    <subcellularLocation>
        <location evidence="1">Membrane</location>
        <topology evidence="3">Multi-pass membrane protein</topology>
    </subcellularLocation>
</comment>
<comment type="similarity">
    <text evidence="3">Belongs to the drug/metabolite transporter (DMT) superfamily. Plant drug/metabolite exporter (P-DME) (TC 2.A.7.4) family.</text>
</comment>
<sequence>MVKFDTKLWKAVLMMSMINIGLSVVNVMFKKMIDEGLNRMVATTYRLAVGTLFLIPFAIFLERHNRPKLTGRILCSLFFSALLGTSLVQYFFLIGLEYTSSTFSLAFSNMVPSVTFALALVFRQETLNIKSNVGRAKLLGTMICICGALVLTLYKGTALSREHSTHMETHTRTDSTGAMTQKWAMGSIMLVISIIIWSSWFIVQAKISRVYPCQYTSTTILSFFGVIQSALLSLISERSTSMWVVKDKFQVLALLYSGIVGSGLCYVGMSWCLRQRGAVFTSSFIPLIQVFAAIFSFSFLHEQIYCGSVIGSMVIIVGLYILLWGKSKDKSASVTKQEPLDLDIEGCGTAPKELNSTAHQVSAK</sequence>
<proteinExistence type="evidence at transcript level"/>
<dbReference type="EMBL" id="AP001314">
    <property type="protein sequence ID" value="BAB02235.1"/>
    <property type="molecule type" value="Genomic_DNA"/>
</dbReference>
<dbReference type="EMBL" id="CP002686">
    <property type="protein sequence ID" value="AEE77633.1"/>
    <property type="molecule type" value="Genomic_DNA"/>
</dbReference>
<dbReference type="EMBL" id="AK118732">
    <property type="protein sequence ID" value="BAC43326.1"/>
    <property type="molecule type" value="mRNA"/>
</dbReference>
<dbReference type="SMR" id="Q9LI65"/>
<dbReference type="BioGRID" id="8061">
    <property type="interactions" value="1"/>
</dbReference>
<dbReference type="IntAct" id="Q9LI65">
    <property type="interactions" value="1"/>
</dbReference>
<dbReference type="PaxDb" id="3702-AT3G30340.1"/>
<dbReference type="ProteomicsDB" id="242469"/>
<dbReference type="EnsemblPlants" id="AT3G30340.1">
    <property type="protein sequence ID" value="AT3G30340.1"/>
    <property type="gene ID" value="AT3G30340"/>
</dbReference>
<dbReference type="Gramene" id="AT3G30340.1">
    <property type="protein sequence ID" value="AT3G30340.1"/>
    <property type="gene ID" value="AT3G30340"/>
</dbReference>
<dbReference type="KEGG" id="ath:AT3G30340"/>
<dbReference type="Araport" id="AT3G30340"/>
<dbReference type="TAIR" id="AT3G30340">
    <property type="gene designation" value="UMAMIT32"/>
</dbReference>
<dbReference type="eggNOG" id="ENOG502QU0E">
    <property type="taxonomic scope" value="Eukaryota"/>
</dbReference>
<dbReference type="HOGENOM" id="CLU_025359_1_0_1"/>
<dbReference type="InParanoid" id="Q9LI65"/>
<dbReference type="OMA" id="IFMERHN"/>
<dbReference type="PhylomeDB" id="Q9LI65"/>
<dbReference type="PRO" id="PR:Q9LI65"/>
<dbReference type="Proteomes" id="UP000006548">
    <property type="component" value="Chromosome 3"/>
</dbReference>
<dbReference type="ExpressionAtlas" id="Q9LI65">
    <property type="expression patterns" value="baseline and differential"/>
</dbReference>
<dbReference type="GO" id="GO:0016020">
    <property type="term" value="C:membrane"/>
    <property type="evidence" value="ECO:0007669"/>
    <property type="project" value="UniProtKB-SubCell"/>
</dbReference>
<dbReference type="GO" id="GO:0022857">
    <property type="term" value="F:transmembrane transporter activity"/>
    <property type="evidence" value="ECO:0007669"/>
    <property type="project" value="InterPro"/>
</dbReference>
<dbReference type="InterPro" id="IPR000620">
    <property type="entry name" value="EamA_dom"/>
</dbReference>
<dbReference type="InterPro" id="IPR030184">
    <property type="entry name" value="WAT1-related"/>
</dbReference>
<dbReference type="PANTHER" id="PTHR31218">
    <property type="entry name" value="WAT1-RELATED PROTEIN"/>
    <property type="match status" value="1"/>
</dbReference>
<dbReference type="Pfam" id="PF00892">
    <property type="entry name" value="EamA"/>
    <property type="match status" value="2"/>
</dbReference>
<dbReference type="SUPFAM" id="SSF103481">
    <property type="entry name" value="Multidrug resistance efflux transporter EmrE"/>
    <property type="match status" value="2"/>
</dbReference>
<evidence type="ECO:0000250" key="1"/>
<evidence type="ECO:0000255" key="2"/>
<evidence type="ECO:0000305" key="3"/>
<protein>
    <recommendedName>
        <fullName>WAT1-related protein At3g30340</fullName>
    </recommendedName>
</protein>
<feature type="chain" id="PRO_0000421332" description="WAT1-related protein At3g30340">
    <location>
        <begin position="1"/>
        <end position="364"/>
    </location>
</feature>
<feature type="transmembrane region" description="Helical" evidence="2">
    <location>
        <begin position="9"/>
        <end position="29"/>
    </location>
</feature>
<feature type="transmembrane region" description="Helical" evidence="2">
    <location>
        <begin position="41"/>
        <end position="61"/>
    </location>
</feature>
<feature type="transmembrane region" description="Helical" evidence="2">
    <location>
        <begin position="76"/>
        <end position="96"/>
    </location>
</feature>
<feature type="transmembrane region" description="Helical" evidence="2">
    <location>
        <begin position="102"/>
        <end position="122"/>
    </location>
</feature>
<feature type="transmembrane region" description="Helical" evidence="2">
    <location>
        <begin position="138"/>
        <end position="158"/>
    </location>
</feature>
<feature type="transmembrane region" description="Helical" evidence="2">
    <location>
        <begin position="183"/>
        <end position="203"/>
    </location>
</feature>
<feature type="transmembrane region" description="Helical" evidence="2">
    <location>
        <begin position="215"/>
        <end position="235"/>
    </location>
</feature>
<feature type="transmembrane region" description="Helical" evidence="2">
    <location>
        <begin position="251"/>
        <end position="271"/>
    </location>
</feature>
<feature type="transmembrane region" description="Helical" evidence="2">
    <location>
        <begin position="277"/>
        <end position="297"/>
    </location>
</feature>
<feature type="transmembrane region" description="Helical" evidence="2">
    <location>
        <begin position="304"/>
        <end position="324"/>
    </location>
</feature>
<feature type="domain" description="EamA 1">
    <location>
        <begin position="26"/>
        <end position="152"/>
    </location>
</feature>
<feature type="domain" description="EamA 2">
    <location>
        <begin position="195"/>
        <end position="323"/>
    </location>
</feature>